<feature type="chain" id="PRO_0000363727" description="Unknown protein 1">
    <location>
        <begin position="1" status="less than"/>
        <end position="12" status="greater than"/>
    </location>
</feature>
<feature type="unsure residue" description="L or I">
    <location>
        <position position="7"/>
    </location>
</feature>
<feature type="unsure residue" description="Q or K">
    <location>
        <position position="8"/>
    </location>
</feature>
<feature type="non-terminal residue">
    <location>
        <position position="1"/>
    </location>
</feature>
<feature type="non-terminal residue">
    <location>
        <position position="12"/>
    </location>
</feature>
<protein>
    <recommendedName>
        <fullName>Unknown protein 1</fullName>
    </recommendedName>
</protein>
<organism>
    <name type="scientific">Solanum lycopersicum</name>
    <name type="common">Tomato</name>
    <name type="synonym">Lycopersicon esculentum</name>
    <dbReference type="NCBI Taxonomy" id="4081"/>
    <lineage>
        <taxon>Eukaryota</taxon>
        <taxon>Viridiplantae</taxon>
        <taxon>Streptophyta</taxon>
        <taxon>Embryophyta</taxon>
        <taxon>Tracheophyta</taxon>
        <taxon>Spermatophyta</taxon>
        <taxon>Magnoliopsida</taxon>
        <taxon>eudicotyledons</taxon>
        <taxon>Gunneridae</taxon>
        <taxon>Pentapetalae</taxon>
        <taxon>asterids</taxon>
        <taxon>lamiids</taxon>
        <taxon>Solanales</taxon>
        <taxon>Solanaceae</taxon>
        <taxon>Solanoideae</taxon>
        <taxon>Solaneae</taxon>
        <taxon>Solanum</taxon>
        <taxon>Solanum subgen. Lycopersicon</taxon>
    </lineage>
</organism>
<evidence type="ECO:0000305" key="1"/>
<accession>P85997</accession>
<name>UP01_SOLLC</name>
<dbReference type="InParanoid" id="P85997"/>
<dbReference type="Proteomes" id="UP000004994">
    <property type="component" value="Unplaced"/>
</dbReference>
<reference evidence="1" key="1">
    <citation type="submission" date="2008-07" db="UniProtKB">
        <authorList>
            <person name="Almagro L."/>
            <person name="Calderon A.A."/>
            <person name="Pedreno M.A."/>
        </authorList>
    </citation>
    <scope>PROTEIN SEQUENCE</scope>
</reference>
<sequence length="12" mass="1492">YEDAYALQYCPR</sequence>
<proteinExistence type="evidence at protein level"/>
<keyword id="KW-0903">Direct protein sequencing</keyword>
<keyword id="KW-1185">Reference proteome</keyword>